<name>RHLB_VIBVU</name>
<feature type="chain" id="PRO_0000200788" description="ATP-dependent RNA helicase RhlB">
    <location>
        <begin position="1"/>
        <end position="435"/>
    </location>
</feature>
<feature type="domain" description="Helicase ATP-binding" evidence="1">
    <location>
        <begin position="40"/>
        <end position="219"/>
    </location>
</feature>
<feature type="domain" description="Helicase C-terminal" evidence="1">
    <location>
        <begin position="245"/>
        <end position="390"/>
    </location>
</feature>
<feature type="region of interest" description="Disordered" evidence="2">
    <location>
        <begin position="395"/>
        <end position="435"/>
    </location>
</feature>
<feature type="short sequence motif" description="Q motif">
    <location>
        <begin position="9"/>
        <end position="37"/>
    </location>
</feature>
<feature type="short sequence motif" description="DEAD box">
    <location>
        <begin position="165"/>
        <end position="168"/>
    </location>
</feature>
<feature type="compositionally biased region" description="Polar residues" evidence="2">
    <location>
        <begin position="401"/>
        <end position="413"/>
    </location>
</feature>
<feature type="compositionally biased region" description="Basic residues" evidence="2">
    <location>
        <begin position="422"/>
        <end position="435"/>
    </location>
</feature>
<feature type="binding site" evidence="1">
    <location>
        <begin position="53"/>
        <end position="60"/>
    </location>
    <ligand>
        <name>ATP</name>
        <dbReference type="ChEBI" id="CHEBI:30616"/>
    </ligand>
</feature>
<reference key="1">
    <citation type="submission" date="2002-12" db="EMBL/GenBank/DDBJ databases">
        <title>Complete genome sequence of Vibrio vulnificus CMCP6.</title>
        <authorList>
            <person name="Rhee J.H."/>
            <person name="Kim S.Y."/>
            <person name="Chung S.S."/>
            <person name="Kim J.J."/>
            <person name="Moon Y.H."/>
            <person name="Jeong H."/>
            <person name="Choy H.E."/>
        </authorList>
    </citation>
    <scope>NUCLEOTIDE SEQUENCE [LARGE SCALE GENOMIC DNA]</scope>
    <source>
        <strain>CMCP6</strain>
    </source>
</reference>
<evidence type="ECO:0000255" key="1">
    <source>
        <dbReference type="HAMAP-Rule" id="MF_00661"/>
    </source>
</evidence>
<evidence type="ECO:0000256" key="2">
    <source>
        <dbReference type="SAM" id="MobiDB-lite"/>
    </source>
</evidence>
<organism>
    <name type="scientific">Vibrio vulnificus (strain CMCP6)</name>
    <dbReference type="NCBI Taxonomy" id="216895"/>
    <lineage>
        <taxon>Bacteria</taxon>
        <taxon>Pseudomonadati</taxon>
        <taxon>Pseudomonadota</taxon>
        <taxon>Gammaproteobacteria</taxon>
        <taxon>Vibrionales</taxon>
        <taxon>Vibrionaceae</taxon>
        <taxon>Vibrio</taxon>
    </lineage>
</organism>
<accession>Q8DDN6</accession>
<keyword id="KW-0067">ATP-binding</keyword>
<keyword id="KW-0963">Cytoplasm</keyword>
<keyword id="KW-0347">Helicase</keyword>
<keyword id="KW-0378">Hydrolase</keyword>
<keyword id="KW-0547">Nucleotide-binding</keyword>
<keyword id="KW-0694">RNA-binding</keyword>
<proteinExistence type="inferred from homology"/>
<gene>
    <name evidence="1" type="primary">rhlB</name>
    <name type="ordered locus">VV1_0939</name>
</gene>
<protein>
    <recommendedName>
        <fullName evidence="1">ATP-dependent RNA helicase RhlB</fullName>
        <ecNumber evidence="1">3.6.4.13</ecNumber>
    </recommendedName>
</protein>
<dbReference type="EC" id="3.6.4.13" evidence="1"/>
<dbReference type="EMBL" id="AE016795">
    <property type="protein sequence ID" value="AAO09436.1"/>
    <property type="molecule type" value="Genomic_DNA"/>
</dbReference>
<dbReference type="RefSeq" id="WP_011078988.1">
    <property type="nucleotide sequence ID" value="NC_004459.3"/>
</dbReference>
<dbReference type="SMR" id="Q8DDN6"/>
<dbReference type="KEGG" id="vvu:VV1_0939"/>
<dbReference type="HOGENOM" id="CLU_003041_1_3_6"/>
<dbReference type="Proteomes" id="UP000002275">
    <property type="component" value="Chromosome 1"/>
</dbReference>
<dbReference type="GO" id="GO:0005829">
    <property type="term" value="C:cytosol"/>
    <property type="evidence" value="ECO:0007669"/>
    <property type="project" value="TreeGrafter"/>
</dbReference>
<dbReference type="GO" id="GO:0005524">
    <property type="term" value="F:ATP binding"/>
    <property type="evidence" value="ECO:0007669"/>
    <property type="project" value="UniProtKB-UniRule"/>
</dbReference>
<dbReference type="GO" id="GO:0016887">
    <property type="term" value="F:ATP hydrolysis activity"/>
    <property type="evidence" value="ECO:0007669"/>
    <property type="project" value="RHEA"/>
</dbReference>
<dbReference type="GO" id="GO:0003723">
    <property type="term" value="F:RNA binding"/>
    <property type="evidence" value="ECO:0007669"/>
    <property type="project" value="UniProtKB-UniRule"/>
</dbReference>
<dbReference type="GO" id="GO:0003724">
    <property type="term" value="F:RNA helicase activity"/>
    <property type="evidence" value="ECO:0007669"/>
    <property type="project" value="UniProtKB-UniRule"/>
</dbReference>
<dbReference type="GO" id="GO:0006401">
    <property type="term" value="P:RNA catabolic process"/>
    <property type="evidence" value="ECO:0007669"/>
    <property type="project" value="UniProtKB-UniRule"/>
</dbReference>
<dbReference type="CDD" id="cd00268">
    <property type="entry name" value="DEADc"/>
    <property type="match status" value="1"/>
</dbReference>
<dbReference type="CDD" id="cd18787">
    <property type="entry name" value="SF2_C_DEAD"/>
    <property type="match status" value="1"/>
</dbReference>
<dbReference type="FunFam" id="3.40.50.300:FF:000008">
    <property type="entry name" value="ATP-dependent RNA helicase RhlB"/>
    <property type="match status" value="1"/>
</dbReference>
<dbReference type="FunFam" id="3.40.50.300:FF:000312">
    <property type="entry name" value="ATP-dependent RNA helicase RhlB"/>
    <property type="match status" value="1"/>
</dbReference>
<dbReference type="Gene3D" id="3.40.50.300">
    <property type="entry name" value="P-loop containing nucleotide triphosphate hydrolases"/>
    <property type="match status" value="2"/>
</dbReference>
<dbReference type="HAMAP" id="MF_00661">
    <property type="entry name" value="DEAD_helicase_RhlB"/>
    <property type="match status" value="1"/>
</dbReference>
<dbReference type="InterPro" id="IPR011545">
    <property type="entry name" value="DEAD/DEAH_box_helicase_dom"/>
</dbReference>
<dbReference type="InterPro" id="IPR050079">
    <property type="entry name" value="DEAD_box_RNA_helicase"/>
</dbReference>
<dbReference type="InterPro" id="IPR014001">
    <property type="entry name" value="Helicase_ATP-bd"/>
</dbReference>
<dbReference type="InterPro" id="IPR001650">
    <property type="entry name" value="Helicase_C-like"/>
</dbReference>
<dbReference type="InterPro" id="IPR027417">
    <property type="entry name" value="P-loop_NTPase"/>
</dbReference>
<dbReference type="InterPro" id="IPR000629">
    <property type="entry name" value="RNA-helicase_DEAD-box_CS"/>
</dbReference>
<dbReference type="InterPro" id="IPR023554">
    <property type="entry name" value="RNA_helicase_ATP-dep_RhlB"/>
</dbReference>
<dbReference type="InterPro" id="IPR014014">
    <property type="entry name" value="RNA_helicase_DEAD_Q_motif"/>
</dbReference>
<dbReference type="NCBIfam" id="NF003419">
    <property type="entry name" value="PRK04837.1"/>
    <property type="match status" value="1"/>
</dbReference>
<dbReference type="PANTHER" id="PTHR47959:SF10">
    <property type="entry name" value="ATP-DEPENDENT RNA HELICASE RHLB"/>
    <property type="match status" value="1"/>
</dbReference>
<dbReference type="PANTHER" id="PTHR47959">
    <property type="entry name" value="ATP-DEPENDENT RNA HELICASE RHLE-RELATED"/>
    <property type="match status" value="1"/>
</dbReference>
<dbReference type="Pfam" id="PF00270">
    <property type="entry name" value="DEAD"/>
    <property type="match status" value="1"/>
</dbReference>
<dbReference type="Pfam" id="PF00271">
    <property type="entry name" value="Helicase_C"/>
    <property type="match status" value="1"/>
</dbReference>
<dbReference type="SMART" id="SM00487">
    <property type="entry name" value="DEXDc"/>
    <property type="match status" value="1"/>
</dbReference>
<dbReference type="SMART" id="SM00490">
    <property type="entry name" value="HELICc"/>
    <property type="match status" value="1"/>
</dbReference>
<dbReference type="SUPFAM" id="SSF52540">
    <property type="entry name" value="P-loop containing nucleoside triphosphate hydrolases"/>
    <property type="match status" value="1"/>
</dbReference>
<dbReference type="PROSITE" id="PS00039">
    <property type="entry name" value="DEAD_ATP_HELICASE"/>
    <property type="match status" value="1"/>
</dbReference>
<dbReference type="PROSITE" id="PS51192">
    <property type="entry name" value="HELICASE_ATP_BIND_1"/>
    <property type="match status" value="1"/>
</dbReference>
<dbReference type="PROSITE" id="PS51194">
    <property type="entry name" value="HELICASE_CTER"/>
    <property type="match status" value="1"/>
</dbReference>
<dbReference type="PROSITE" id="PS51195">
    <property type="entry name" value="Q_MOTIF"/>
    <property type="match status" value="1"/>
</dbReference>
<comment type="function">
    <text evidence="1">DEAD-box RNA helicase involved in RNA degradation. Has RNA-dependent ATPase activity and unwinds double-stranded RNA.</text>
</comment>
<comment type="catalytic activity">
    <reaction evidence="1">
        <text>ATP + H2O = ADP + phosphate + H(+)</text>
        <dbReference type="Rhea" id="RHEA:13065"/>
        <dbReference type="ChEBI" id="CHEBI:15377"/>
        <dbReference type="ChEBI" id="CHEBI:15378"/>
        <dbReference type="ChEBI" id="CHEBI:30616"/>
        <dbReference type="ChEBI" id="CHEBI:43474"/>
        <dbReference type="ChEBI" id="CHEBI:456216"/>
        <dbReference type="EC" id="3.6.4.13"/>
    </reaction>
</comment>
<comment type="subunit">
    <text evidence="1">Component of the RNA degradosome, which is a multiprotein complex involved in RNA processing and mRNA degradation.</text>
</comment>
<comment type="subcellular location">
    <subcellularLocation>
        <location evidence="1">Cytoplasm</location>
    </subcellularLocation>
</comment>
<comment type="similarity">
    <text evidence="1">Belongs to the DEAD box helicase family. RhlB subfamily.</text>
</comment>
<sequence>MKKTHITEQKFADLGLNPQVVEGLEKKGFEFCTPIQALALPVLLSGQDIAGQAQTGTGKTLAFLTATFNHLLTTPAHEGRQPTQPRAIIMAPTRELAIQIYNDAEPLIASTGIKAALAYGGESYDKQLTKLQGGVDVLIGTTGRIIDFYKQRVFNLNNIQAVVLDEADRMFDLGFIKDIRFLFRRMPAPQERLNMLFSATLSYRVQELAFEHMHNPEHVVVEPEQKTGHRIQEELFYPSNEDKMALLQTLIEEEWPDRAIIFANTKYKCESIWAHLAADGHRVGLLTGDVPQKKREKILEQFTQGSVDLLVATDVAARGLHIPQVTHVFNYDLPDDCEDYVHRIGRTGRAGASGHSISFACEDYAINLPAIEEYIEHTIPVSDYDSSALIQDLPAPVRTPSARNQQRRTNTGGARSGDRKSNNRRPRQPRQHKEA</sequence>